<name>RL22_ACIF5</name>
<keyword id="KW-0687">Ribonucleoprotein</keyword>
<keyword id="KW-0689">Ribosomal protein</keyword>
<keyword id="KW-0694">RNA-binding</keyword>
<keyword id="KW-0699">rRNA-binding</keyword>
<proteinExistence type="inferred from homology"/>
<sequence>MKSSAVLKGLQMSPQKARLVADLVRGQPVGKALEILRFTTKKAALPIRKCLESAIANAENNEGADVDALVVEQIMIDGGAVLKRFAARAKGRGSRILKRTSHITVVVAEVY</sequence>
<reference key="1">
    <citation type="submission" date="2008-08" db="EMBL/GenBank/DDBJ databases">
        <title>Complete sequence of Acidithiobacillus ferrooxidans ATCC 53993.</title>
        <authorList>
            <person name="Lucas S."/>
            <person name="Copeland A."/>
            <person name="Lapidus A."/>
            <person name="Glavina del Rio T."/>
            <person name="Dalin E."/>
            <person name="Tice H."/>
            <person name="Bruce D."/>
            <person name="Goodwin L."/>
            <person name="Pitluck S."/>
            <person name="Sims D."/>
            <person name="Brettin T."/>
            <person name="Detter J.C."/>
            <person name="Han C."/>
            <person name="Kuske C.R."/>
            <person name="Larimer F."/>
            <person name="Land M."/>
            <person name="Hauser L."/>
            <person name="Kyrpides N."/>
            <person name="Lykidis A."/>
            <person name="Borole A.P."/>
        </authorList>
    </citation>
    <scope>NUCLEOTIDE SEQUENCE [LARGE SCALE GENOMIC DNA]</scope>
    <source>
        <strain>ATCC 53993 / BNL-5-31</strain>
    </source>
</reference>
<dbReference type="EMBL" id="CP001132">
    <property type="protein sequence ID" value="ACH82756.1"/>
    <property type="molecule type" value="Genomic_DNA"/>
</dbReference>
<dbReference type="RefSeq" id="WP_009565436.1">
    <property type="nucleotide sequence ID" value="NC_011206.1"/>
</dbReference>
<dbReference type="SMR" id="B5ELY4"/>
<dbReference type="GeneID" id="65279711"/>
<dbReference type="KEGG" id="afe:Lferr_0502"/>
<dbReference type="eggNOG" id="COG0091">
    <property type="taxonomic scope" value="Bacteria"/>
</dbReference>
<dbReference type="HOGENOM" id="CLU_083987_3_3_6"/>
<dbReference type="GO" id="GO:0022625">
    <property type="term" value="C:cytosolic large ribosomal subunit"/>
    <property type="evidence" value="ECO:0007669"/>
    <property type="project" value="TreeGrafter"/>
</dbReference>
<dbReference type="GO" id="GO:0019843">
    <property type="term" value="F:rRNA binding"/>
    <property type="evidence" value="ECO:0007669"/>
    <property type="project" value="UniProtKB-UniRule"/>
</dbReference>
<dbReference type="GO" id="GO:0003735">
    <property type="term" value="F:structural constituent of ribosome"/>
    <property type="evidence" value="ECO:0007669"/>
    <property type="project" value="InterPro"/>
</dbReference>
<dbReference type="GO" id="GO:0006412">
    <property type="term" value="P:translation"/>
    <property type="evidence" value="ECO:0007669"/>
    <property type="project" value="UniProtKB-UniRule"/>
</dbReference>
<dbReference type="CDD" id="cd00336">
    <property type="entry name" value="Ribosomal_L22"/>
    <property type="match status" value="1"/>
</dbReference>
<dbReference type="Gene3D" id="3.90.470.10">
    <property type="entry name" value="Ribosomal protein L22/L17"/>
    <property type="match status" value="1"/>
</dbReference>
<dbReference type="HAMAP" id="MF_01331_B">
    <property type="entry name" value="Ribosomal_uL22_B"/>
    <property type="match status" value="1"/>
</dbReference>
<dbReference type="InterPro" id="IPR001063">
    <property type="entry name" value="Ribosomal_uL22"/>
</dbReference>
<dbReference type="InterPro" id="IPR005727">
    <property type="entry name" value="Ribosomal_uL22_bac/chlpt-type"/>
</dbReference>
<dbReference type="InterPro" id="IPR047867">
    <property type="entry name" value="Ribosomal_uL22_bac/org-type"/>
</dbReference>
<dbReference type="InterPro" id="IPR018260">
    <property type="entry name" value="Ribosomal_uL22_CS"/>
</dbReference>
<dbReference type="InterPro" id="IPR036394">
    <property type="entry name" value="Ribosomal_uL22_sf"/>
</dbReference>
<dbReference type="NCBIfam" id="TIGR01044">
    <property type="entry name" value="rplV_bact"/>
    <property type="match status" value="1"/>
</dbReference>
<dbReference type="PANTHER" id="PTHR13501">
    <property type="entry name" value="CHLOROPLAST 50S RIBOSOMAL PROTEIN L22-RELATED"/>
    <property type="match status" value="1"/>
</dbReference>
<dbReference type="PANTHER" id="PTHR13501:SF8">
    <property type="entry name" value="LARGE RIBOSOMAL SUBUNIT PROTEIN UL22M"/>
    <property type="match status" value="1"/>
</dbReference>
<dbReference type="Pfam" id="PF00237">
    <property type="entry name" value="Ribosomal_L22"/>
    <property type="match status" value="1"/>
</dbReference>
<dbReference type="SUPFAM" id="SSF54843">
    <property type="entry name" value="Ribosomal protein L22"/>
    <property type="match status" value="1"/>
</dbReference>
<dbReference type="PROSITE" id="PS00464">
    <property type="entry name" value="RIBOSOMAL_L22"/>
    <property type="match status" value="1"/>
</dbReference>
<feature type="chain" id="PRO_1000142218" description="Large ribosomal subunit protein uL22">
    <location>
        <begin position="1"/>
        <end position="111"/>
    </location>
</feature>
<comment type="function">
    <text evidence="1">This protein binds specifically to 23S rRNA; its binding is stimulated by other ribosomal proteins, e.g. L4, L17, and L20. It is important during the early stages of 50S assembly. It makes multiple contacts with different domains of the 23S rRNA in the assembled 50S subunit and ribosome (By similarity).</text>
</comment>
<comment type="function">
    <text evidence="1">The globular domain of the protein is located near the polypeptide exit tunnel on the outside of the subunit, while an extended beta-hairpin is found that lines the wall of the exit tunnel in the center of the 70S ribosome.</text>
</comment>
<comment type="subunit">
    <text evidence="1">Part of the 50S ribosomal subunit.</text>
</comment>
<comment type="similarity">
    <text evidence="1">Belongs to the universal ribosomal protein uL22 family.</text>
</comment>
<protein>
    <recommendedName>
        <fullName evidence="1">Large ribosomal subunit protein uL22</fullName>
    </recommendedName>
    <alternativeName>
        <fullName evidence="2">50S ribosomal protein L22</fullName>
    </alternativeName>
</protein>
<evidence type="ECO:0000255" key="1">
    <source>
        <dbReference type="HAMAP-Rule" id="MF_01331"/>
    </source>
</evidence>
<evidence type="ECO:0000305" key="2"/>
<organism>
    <name type="scientific">Acidithiobacillus ferrooxidans (strain ATCC 53993 / BNL-5-31)</name>
    <name type="common">Leptospirillum ferrooxidans (ATCC 53993)</name>
    <dbReference type="NCBI Taxonomy" id="380394"/>
    <lineage>
        <taxon>Bacteria</taxon>
        <taxon>Pseudomonadati</taxon>
        <taxon>Pseudomonadota</taxon>
        <taxon>Acidithiobacillia</taxon>
        <taxon>Acidithiobacillales</taxon>
        <taxon>Acidithiobacillaceae</taxon>
        <taxon>Acidithiobacillus</taxon>
    </lineage>
</organism>
<accession>B5ELY4</accession>
<gene>
    <name evidence="1" type="primary">rplV</name>
    <name type="ordered locus">Lferr_0502</name>
</gene>